<accession>P47333</accession>
<feature type="chain" id="PRO_0000146259" description="Small ribosomal subunit protein uS12">
    <location>
        <begin position="1"/>
        <end position="139"/>
    </location>
</feature>
<feature type="region of interest" description="Disordered" evidence="2">
    <location>
        <begin position="119"/>
        <end position="139"/>
    </location>
</feature>
<protein>
    <recommendedName>
        <fullName evidence="1">Small ribosomal subunit protein uS12</fullName>
    </recommendedName>
    <alternativeName>
        <fullName evidence="3">30S ribosomal protein S12</fullName>
    </alternativeName>
</protein>
<organism>
    <name type="scientific">Mycoplasma genitalium (strain ATCC 33530 / DSM 19775 / NCTC 10195 / G37)</name>
    <name type="common">Mycoplasmoides genitalium</name>
    <dbReference type="NCBI Taxonomy" id="243273"/>
    <lineage>
        <taxon>Bacteria</taxon>
        <taxon>Bacillati</taxon>
        <taxon>Mycoplasmatota</taxon>
        <taxon>Mycoplasmoidales</taxon>
        <taxon>Mycoplasmoidaceae</taxon>
        <taxon>Mycoplasmoides</taxon>
    </lineage>
</organism>
<comment type="function">
    <text evidence="1">With S4 and S5 plays an important role in translational accuracy.</text>
</comment>
<comment type="function">
    <text evidence="1">Interacts with and stabilizes bases of the 16S rRNA that are involved in tRNA selection in the A site and with the mRNA backbone. Located at the interface of the 30S and 50S subunits, it traverses the body of the 30S subunit contacting proteins on the other side and probably holding the rRNA structure together. The combined cluster of proteins S8, S12 and S17 appears to hold together the shoulder and platform of the 30S subunit.</text>
</comment>
<comment type="subunit">
    <text evidence="1">Part of the 30S ribosomal subunit. Contacts proteins S8 and S17. May interact with IF1 in the 30S initiation complex.</text>
</comment>
<comment type="similarity">
    <text evidence="1">Belongs to the universal ribosomal protein uS12 family.</text>
</comment>
<comment type="caution">
    <text evidence="3">Because the enzyme that would modify Asp-102 to 3-methylthioaspartic acid has not been found in the proteome of this organism, that modification is not predicted.</text>
</comment>
<dbReference type="EMBL" id="L43967">
    <property type="protein sequence ID" value="AAC71305.1"/>
    <property type="molecule type" value="Genomic_DNA"/>
</dbReference>
<dbReference type="EMBL" id="U02212">
    <property type="protein sequence ID" value="AAD12506.1"/>
    <property type="molecule type" value="Genomic_DNA"/>
</dbReference>
<dbReference type="PIR" id="F64209">
    <property type="entry name" value="F64209"/>
</dbReference>
<dbReference type="RefSeq" id="WP_010869326.1">
    <property type="nucleotide sequence ID" value="NC_000908.2"/>
</dbReference>
<dbReference type="SMR" id="P47333"/>
<dbReference type="FunCoup" id="P47333">
    <property type="interactions" value="199"/>
</dbReference>
<dbReference type="STRING" id="243273.MG_087"/>
<dbReference type="GeneID" id="88282210"/>
<dbReference type="KEGG" id="mge:MG_087"/>
<dbReference type="eggNOG" id="COG0048">
    <property type="taxonomic scope" value="Bacteria"/>
</dbReference>
<dbReference type="HOGENOM" id="CLU_104295_1_2_14"/>
<dbReference type="InParanoid" id="P47333"/>
<dbReference type="OrthoDB" id="9802366at2"/>
<dbReference type="BioCyc" id="MGEN243273:G1GJ2-99-MONOMER"/>
<dbReference type="Proteomes" id="UP000000807">
    <property type="component" value="Chromosome"/>
</dbReference>
<dbReference type="GO" id="GO:0005840">
    <property type="term" value="C:ribosome"/>
    <property type="evidence" value="ECO:0000318"/>
    <property type="project" value="GO_Central"/>
</dbReference>
<dbReference type="GO" id="GO:0015935">
    <property type="term" value="C:small ribosomal subunit"/>
    <property type="evidence" value="ECO:0007669"/>
    <property type="project" value="InterPro"/>
</dbReference>
<dbReference type="GO" id="GO:0019843">
    <property type="term" value="F:rRNA binding"/>
    <property type="evidence" value="ECO:0007669"/>
    <property type="project" value="UniProtKB-UniRule"/>
</dbReference>
<dbReference type="GO" id="GO:0003735">
    <property type="term" value="F:structural constituent of ribosome"/>
    <property type="evidence" value="ECO:0000318"/>
    <property type="project" value="GO_Central"/>
</dbReference>
<dbReference type="GO" id="GO:0000049">
    <property type="term" value="F:tRNA binding"/>
    <property type="evidence" value="ECO:0007669"/>
    <property type="project" value="UniProtKB-UniRule"/>
</dbReference>
<dbReference type="GO" id="GO:0006412">
    <property type="term" value="P:translation"/>
    <property type="evidence" value="ECO:0000318"/>
    <property type="project" value="GO_Central"/>
</dbReference>
<dbReference type="CDD" id="cd03368">
    <property type="entry name" value="Ribosomal_S12"/>
    <property type="match status" value="1"/>
</dbReference>
<dbReference type="FunFam" id="2.40.50.140:FF:000001">
    <property type="entry name" value="30S ribosomal protein S12"/>
    <property type="match status" value="1"/>
</dbReference>
<dbReference type="Gene3D" id="2.40.50.140">
    <property type="entry name" value="Nucleic acid-binding proteins"/>
    <property type="match status" value="1"/>
</dbReference>
<dbReference type="HAMAP" id="MF_00403_B">
    <property type="entry name" value="Ribosomal_uS12_B"/>
    <property type="match status" value="1"/>
</dbReference>
<dbReference type="InterPro" id="IPR012340">
    <property type="entry name" value="NA-bd_OB-fold"/>
</dbReference>
<dbReference type="InterPro" id="IPR006032">
    <property type="entry name" value="Ribosomal_uS12"/>
</dbReference>
<dbReference type="InterPro" id="IPR005679">
    <property type="entry name" value="Ribosomal_uS12_bac"/>
</dbReference>
<dbReference type="NCBIfam" id="TIGR00981">
    <property type="entry name" value="rpsL_bact"/>
    <property type="match status" value="1"/>
</dbReference>
<dbReference type="PANTHER" id="PTHR11652">
    <property type="entry name" value="30S RIBOSOMAL PROTEIN S12 FAMILY MEMBER"/>
    <property type="match status" value="1"/>
</dbReference>
<dbReference type="Pfam" id="PF00164">
    <property type="entry name" value="Ribosom_S12_S23"/>
    <property type="match status" value="1"/>
</dbReference>
<dbReference type="PIRSF" id="PIRSF002133">
    <property type="entry name" value="Ribosomal_S12/S23"/>
    <property type="match status" value="1"/>
</dbReference>
<dbReference type="PRINTS" id="PR01034">
    <property type="entry name" value="RIBOSOMALS12"/>
</dbReference>
<dbReference type="SUPFAM" id="SSF50249">
    <property type="entry name" value="Nucleic acid-binding proteins"/>
    <property type="match status" value="1"/>
</dbReference>
<dbReference type="PROSITE" id="PS00055">
    <property type="entry name" value="RIBOSOMAL_S12"/>
    <property type="match status" value="1"/>
</dbReference>
<proteinExistence type="inferred from homology"/>
<keyword id="KW-1185">Reference proteome</keyword>
<keyword id="KW-0687">Ribonucleoprotein</keyword>
<keyword id="KW-0689">Ribosomal protein</keyword>
<keyword id="KW-0694">RNA-binding</keyword>
<keyword id="KW-0699">rRNA-binding</keyword>
<keyword id="KW-0820">tRNA-binding</keyword>
<evidence type="ECO:0000255" key="1">
    <source>
        <dbReference type="HAMAP-Rule" id="MF_00403"/>
    </source>
</evidence>
<evidence type="ECO:0000256" key="2">
    <source>
        <dbReference type="SAM" id="MobiDB-lite"/>
    </source>
</evidence>
<evidence type="ECO:0000305" key="3"/>
<name>RS12_MYCGE</name>
<gene>
    <name evidence="1" type="primary">rpsL</name>
    <name evidence="1" type="synonym">rps12</name>
    <name type="ordered locus">MG087</name>
</gene>
<reference key="1">
    <citation type="journal article" date="1995" name="Science">
        <title>The minimal gene complement of Mycoplasma genitalium.</title>
        <authorList>
            <person name="Fraser C.M."/>
            <person name="Gocayne J.D."/>
            <person name="White O."/>
            <person name="Adams M.D."/>
            <person name="Clayton R.A."/>
            <person name="Fleischmann R.D."/>
            <person name="Bult C.J."/>
            <person name="Kerlavage A.R."/>
            <person name="Sutton G.G."/>
            <person name="Kelley J.M."/>
            <person name="Fritchman J.L."/>
            <person name="Weidman J.F."/>
            <person name="Small K.V."/>
            <person name="Sandusky M."/>
            <person name="Fuhrmann J.L."/>
            <person name="Nguyen D.T."/>
            <person name="Utterback T.R."/>
            <person name="Saudek D.M."/>
            <person name="Phillips C.A."/>
            <person name="Merrick J.M."/>
            <person name="Tomb J.-F."/>
            <person name="Dougherty B.A."/>
            <person name="Bott K.F."/>
            <person name="Hu P.-C."/>
            <person name="Lucier T.S."/>
            <person name="Peterson S.N."/>
            <person name="Smith H.O."/>
            <person name="Hutchison C.A. III"/>
            <person name="Venter J.C."/>
        </authorList>
    </citation>
    <scope>NUCLEOTIDE SEQUENCE [LARGE SCALE GENOMIC DNA]</scope>
    <source>
        <strain>ATCC 33530 / DSM 19775 / NCTC 10195 / G37</strain>
    </source>
</reference>
<reference key="2">
    <citation type="journal article" date="1993" name="J. Bacteriol.">
        <title>A survey of the Mycoplasma genitalium genome by using random sequencing.</title>
        <authorList>
            <person name="Peterson S.N."/>
            <person name="Hu P.-C."/>
            <person name="Bott K.F."/>
            <person name="Hutchison C.A. III"/>
        </authorList>
    </citation>
    <scope>NUCLEOTIDE SEQUENCE [GENOMIC DNA] OF 117-139</scope>
    <source>
        <strain>ATCC 33530 / DSM 19775 / NCTC 10195 / G37</strain>
    </source>
</reference>
<sequence length="139" mass="15641">MATIAQLIRKPRQKKKVKSKSPALHYNLNLLNKKTTNVYSPLKRGVCTRVGTMTPRKPNSALRKYAKVRLTNGFEVLAYIPGEGHNLQEHSVTLLRGGRVKDLPGVRYHIVRGTLDTVGVDKRRQQRSAYGAKKPKPKS</sequence>